<keyword id="KW-0903">Direct protein sequencing</keyword>
<keyword id="KW-1015">Disulfide bond</keyword>
<keyword id="KW-0646">Protease inhibitor</keyword>
<keyword id="KW-0964">Secreted</keyword>
<keyword id="KW-0722">Serine protease inhibitor</keyword>
<reference key="1">
    <citation type="journal article" date="1994" name="J. Biochem.">
        <title>Amino acid sequences of Kunitz family subtilisin inhibitors from seeds of Canavalia lineata.</title>
        <authorList>
            <person name="Terada S."/>
            <person name="Katayama H."/>
            <person name="Noda K."/>
            <person name="Fujimura S."/>
            <person name="Kimoto E."/>
        </authorList>
    </citation>
    <scope>PROTEIN SEQUENCE</scope>
    <scope>REACTIVE SITE</scope>
    <scope>DISULFIDE BONDS</scope>
    <source>
        <tissue>Seed</tissue>
    </source>
</reference>
<reference key="2">
    <citation type="journal article" date="1994" name="J. Biochem.">
        <title>Purification and characterization of two Kunitz family subtilisin inhibitors from seeds of Canavalia lineata.</title>
        <authorList>
            <person name="Terada S."/>
            <person name="Fujimura S."/>
            <person name="Katayama H."/>
            <person name="Nagasawa M."/>
            <person name="Kimoto E."/>
        </authorList>
    </citation>
    <scope>CHARACTERIZATION</scope>
    <source>
        <tissue>Seed</tissue>
    </source>
</reference>
<protein>
    <recommendedName>
        <fullName>Subtilisin inhibitor CLSI-II</fullName>
    </recommendedName>
    <component>
        <recommendedName>
            <fullName>Subtilisin inhibitor CLSI-III</fullName>
        </recommendedName>
    </component>
</protein>
<evidence type="ECO:0000250" key="1"/>
<evidence type="ECO:0000255" key="2"/>
<evidence type="ECO:0000269" key="3">
    <source>
    </source>
</evidence>
<evidence type="ECO:0000305" key="4"/>
<sequence length="190" mass="20750">NDVDVVMDASSKPIFPGGEYYIMPAIWGPPGGGVRLAKTRNSDCPVTVLQDYGEVIFGQPVKFTLPGRGSGLIITNTPVEEFIKKPECASSSKWSVFVDDEIEKACVGIGGHEDHPGEQVFSGTFTIQKSRTPYNSYKLVFCESDSSTCSDIGRYDNNEGGRRLILTHHNPFQVVFMDASTFDGTIRSDG</sequence>
<organism>
    <name type="scientific">Canavalia lineata</name>
    <name type="common">Beach bean</name>
    <name type="synonym">Dolichos lineatus</name>
    <dbReference type="NCBI Taxonomy" id="28957"/>
    <lineage>
        <taxon>Eukaryota</taxon>
        <taxon>Viridiplantae</taxon>
        <taxon>Streptophyta</taxon>
        <taxon>Embryophyta</taxon>
        <taxon>Tracheophyta</taxon>
        <taxon>Spermatophyta</taxon>
        <taxon>Magnoliopsida</taxon>
        <taxon>eudicotyledons</taxon>
        <taxon>Gunneridae</taxon>
        <taxon>Pentapetalae</taxon>
        <taxon>rosids</taxon>
        <taxon>fabids</taxon>
        <taxon>Fabales</taxon>
        <taxon>Fabaceae</taxon>
        <taxon>Papilionoideae</taxon>
        <taxon>50 kb inversion clade</taxon>
        <taxon>NPAAA clade</taxon>
        <taxon>indigoferoid/millettioid clade</taxon>
        <taxon>Phaseoleae</taxon>
        <taxon>Canavalia</taxon>
    </lineage>
</organism>
<proteinExistence type="evidence at protein level"/>
<dbReference type="PIR" id="A59416">
    <property type="entry name" value="A59416"/>
</dbReference>
<dbReference type="PIR" id="A59418">
    <property type="entry name" value="A59418"/>
</dbReference>
<dbReference type="PIR" id="JX0310">
    <property type="entry name" value="JX0310"/>
</dbReference>
<dbReference type="PIR" id="JX0311">
    <property type="entry name" value="JX0311"/>
</dbReference>
<dbReference type="SMR" id="P81726"/>
<dbReference type="MEROPS" id="I03.025"/>
<dbReference type="GO" id="GO:0005576">
    <property type="term" value="C:extracellular region"/>
    <property type="evidence" value="ECO:0007669"/>
    <property type="project" value="UniProtKB-SubCell"/>
</dbReference>
<dbReference type="GO" id="GO:0004867">
    <property type="term" value="F:serine-type endopeptidase inhibitor activity"/>
    <property type="evidence" value="ECO:0007669"/>
    <property type="project" value="UniProtKB-KW"/>
</dbReference>
<dbReference type="CDD" id="cd23377">
    <property type="entry name" value="beta-trefoil_STI_MP4-like"/>
    <property type="match status" value="1"/>
</dbReference>
<dbReference type="Gene3D" id="2.80.10.50">
    <property type="match status" value="1"/>
</dbReference>
<dbReference type="InterPro" id="IPR011065">
    <property type="entry name" value="Kunitz_inhibitor_STI-like_sf"/>
</dbReference>
<dbReference type="InterPro" id="IPR002160">
    <property type="entry name" value="Prot_inh_Kunz-lg"/>
</dbReference>
<dbReference type="PANTHER" id="PTHR33107:SF21">
    <property type="entry name" value="KUNITZ FAMILY TRYPSIN AND PROTEASE INHIBITOR PROTEIN"/>
    <property type="match status" value="1"/>
</dbReference>
<dbReference type="PANTHER" id="PTHR33107">
    <property type="entry name" value="KUNITZ TRYPSIN INHIBITOR 2"/>
    <property type="match status" value="1"/>
</dbReference>
<dbReference type="Pfam" id="PF00197">
    <property type="entry name" value="Kunitz_legume"/>
    <property type="match status" value="1"/>
</dbReference>
<dbReference type="PRINTS" id="PR00291">
    <property type="entry name" value="KUNITZINHBTR"/>
</dbReference>
<dbReference type="SMART" id="SM00452">
    <property type="entry name" value="STI"/>
    <property type="match status" value="1"/>
</dbReference>
<dbReference type="SUPFAM" id="SSF50386">
    <property type="entry name" value="STI-like"/>
    <property type="match status" value="1"/>
</dbReference>
<feature type="chain" id="PRO_0000016933" description="Subtilisin inhibitor CLSI-II">
    <location>
        <begin position="1"/>
        <end position="190"/>
    </location>
</feature>
<feature type="chain" id="PRO_0000016934" description="Subtilisin inhibitor CLSI-III">
    <location>
        <begin position="1"/>
        <end position="183"/>
    </location>
</feature>
<feature type="site" description="Reactive bond" evidence="1">
    <location>
        <begin position="68"/>
        <end position="69"/>
    </location>
</feature>
<feature type="disulfide bond" evidence="3">
    <location>
        <begin position="44"/>
        <end position="88"/>
    </location>
</feature>
<feature type="disulfide bond" description="Interchain" evidence="2">
    <location>
        <position position="106"/>
    </location>
</feature>
<feature type="disulfide bond" evidence="3">
    <location>
        <begin position="142"/>
        <end position="149"/>
    </location>
</feature>
<feature type="sequence variant">
    <location>
        <position position="1"/>
    </location>
</feature>
<name>ICI2_CANLI</name>
<accession>P81726</accession>
<accession>P81724</accession>
<comment type="function">
    <text>Inhibits subtilisin-type microbial serine proteases incuding proteinase K, subtilisin BPN', subtilisin Carlsberg and subtilisin E in a non-stoichiometric manner. Weakly inhibits A.oryzae protease and some metalloproteases including pronase E. Does not inhibit trypsin, chymotrypsin, S.griseus alkaline protease or A.lyticus lysyl endopeptidase. CLSI-II has a wider inhibitory specificity than CLSI-III.</text>
</comment>
<comment type="subunit">
    <text>Forms active dimers on storage in aqueous solution, possibly through formation of an intermolecular disulfide bond.</text>
</comment>
<comment type="subcellular location">
    <subcellularLocation>
        <location>Secreted</location>
    </subcellularLocation>
</comment>
<comment type="PTM">
    <text>The N-terminal Asn is removed in about 50% of both the CLSI-II and CLSI-III chains.</text>
</comment>
<comment type="similarity">
    <text evidence="4">Belongs to the protease inhibitor I3 (leguminous Kunitz-type inhibitor) family.</text>
</comment>